<organism>
    <name type="scientific">Potato virus Y (strain C)</name>
    <name type="common">PVY</name>
    <name type="synonym">Potato virus C</name>
    <dbReference type="NCBI Taxonomy" id="12217"/>
    <lineage>
        <taxon>Viruses</taxon>
        <taxon>Riboviria</taxon>
        <taxon>Orthornavirae</taxon>
        <taxon>Pisuviricota</taxon>
        <taxon>Stelpaviricetes</taxon>
        <taxon>Patatavirales</taxon>
        <taxon>Potyviridae</taxon>
        <taxon>Potyvirus</taxon>
        <taxon>Potyvirus yituberosi</taxon>
        <taxon>Potato virus Y</taxon>
    </lineage>
</organism>
<protein>
    <recommendedName>
        <fullName>Genome polyprotein</fullName>
    </recommendedName>
    <component>
        <recommendedName>
            <fullName>P1 proteinase</fullName>
            <ecNumber evidence="2">3.4.-.-</ecNumber>
        </recommendedName>
        <alternativeName>
            <fullName>N-terminal protein</fullName>
        </alternativeName>
    </component>
    <component>
        <recommendedName>
            <fullName>Helper component proteinase</fullName>
            <shortName>HC-pro</shortName>
            <ecNumber evidence="2">3.4.22.45</ecNumber>
        </recommendedName>
    </component>
    <component>
        <recommendedName>
            <fullName>Protein P3</fullName>
        </recommendedName>
    </component>
</protein>
<comment type="function">
    <molecule>Helper component proteinase</molecule>
    <text evidence="2 6">Required for aphid transmission and also has proteolytic activity (By similarity). Only cleaves a Gly-Gly dipeptide at its own C-terminus (By similarity). Interacts with virions and aphid stylets (PubMed:9880030). Acts as a suppressor of RNA-mediated gene silencing, also known as post-transcriptional gene silencing (PTGS), a mechanism of plant viral defense that limits the accumulation of viral RNAs. May have RNA-binding activity (By similarity).</text>
</comment>
<comment type="catalytic activity">
    <reaction evidence="2">
        <text>Hydrolyzes a Gly-|-Gly bond at its own C-terminus, commonly in the sequence -Tyr-Xaa-Val-Gly-|-Gly, in the processing of the potyviral polyprotein.</text>
        <dbReference type="EC" id="3.4.22.45"/>
    </reaction>
</comment>
<comment type="domain">
    <molecule>Helper component proteinase</molecule>
    <text>The N-terminus is involved in interaction with stylets. The central part is involved in interaction with virions and the C-terminus is involved in cell-to cell movement of the virus.</text>
</comment>
<comment type="PTM">
    <molecule>Genome polyprotein</molecule>
    <text evidence="1">Genome polyprotein of potyviruses undergoes post-translational proteolytic processing by the main proteinase NIa-pro resulting in the production of at least ten individual proteins. The P1 proteinase and the HC-pro cleave only their respective C-termini autocatalytically. 6K1 is essential for proper proteolytic separation of P3 from CI (By similarity).</text>
</comment>
<comment type="similarity">
    <text evidence="7">Belongs to the potyviridae genome polyprotein family.</text>
</comment>
<reference key="1">
    <citation type="journal article" date="1990" name="Virology">
        <title>Comparative sequence of the helper component (HC) region of potato virus Y and a HC-defective strain, potato virus C.</title>
        <authorList>
            <person name="Thornbury D.W."/>
            <person name="Patterson C.A."/>
            <person name="Dessens J.T."/>
            <person name="Pirone T.P."/>
        </authorList>
    </citation>
    <scope>NUCLEOTIDE SEQUENCE [GENOMIC RNA]</scope>
</reference>
<reference key="2">
    <citation type="journal article" date="1998" name="J. Gen. Virol.">
        <title>Mutations in the potyvirus helper component protein: effects on interactions with virions and aphid stylets.</title>
        <authorList>
            <person name="Blanc S."/>
            <person name="Ammar E.D."/>
            <person name="Garcia-Lampasona S."/>
            <person name="Dolja V.V."/>
            <person name="Llave C."/>
            <person name="Baker J."/>
            <person name="Pirone T.P."/>
        </authorList>
    </citation>
    <scope>FUNCTION (HELPER COMPONENT PROTEINASE)</scope>
</reference>
<reference key="3">
    <citation type="journal article" date="2001" name="Virus Res.">
        <title>Potyvirus proteins: a wealth of functions.</title>
        <authorList>
            <person name="Urcuqui-Inchima S."/>
            <person name="Haenni A.L."/>
            <person name="Bernardi F."/>
        </authorList>
    </citation>
    <scope>REVIEW</scope>
</reference>
<sequence>MAIYMSTICFGSIECKLPYSPASCGHVTEEREVLASVEPFMDLEAQLSARLLRQKHATVRVLKNGTCAYRYKTDAQIVRIQKKLERKERDEYHFQMAAPSIVSKITIAGGDPPSKYEPQTPKRVIHTTPRVRKVKKHSIIKLTESQMNHLIKQVKRIMSAKKGSVHLINKKSTHVQYKEILGTTRAAVRTAHMMGLRRRVDFRCDMWTTERLKCLARTDKWSNRVHTINIRKGDSGVILNADSLKGHFGRSSGGLFIVRGSHEGKLYDARSKVTQGVLNSMVQFSNAENFWKGLDDNWARMRYPSDHTCIDGLPVEDCGRVAALMTHSILPCYEITCPTCAQQYANLPASDLFKLLHKHARDGLSRLGSDKDRFVHVNKFLVALEHLTEPVDLNLELFNEIFKSIGEKQQAPFKNLNVLNNFFLKGKENTAHEWQVAQLSLLELARFQKNRTDNIKKGDISFFRNKLSAKANWNLYLSCDNQLDKNANFLWGQREYHAKRFFSNFFEEVDPAKGYSAYEIRKHPNGTRKLSIGNLVVPLDLAEFRQKMKGDYRKQPGVSKRCTSSKDGNYVYPCCCTTLDDGSAIESTFYPPTKKHLVIGNSGDQKYVDLPKGDSEMLYIAKQGYCYINVFLAMLINVSEEDAKDFTKKVRDMCVPKLGTWPTMMDLATTCAQMRIFYPDVHDAELPRILVDHDTQTCHVVDSFGSQTTGYHILKASSVSQLILFANDELESEIKHYRVGGVPNACPELGSTISPFREGGVIMSESAALKLLLKGIFRPKVMRQLLLDEPHLLILSILSPGILMAMYNNGIFELAVRLWINEKQSIAMIASLLSALALRVSAAETLVAQRIIIDAA</sequence>
<proteinExistence type="inferred from homology"/>
<evidence type="ECO:0000250" key="1"/>
<evidence type="ECO:0000250" key="2">
    <source>
        <dbReference type="UniProtKB" id="P04517"/>
    </source>
</evidence>
<evidence type="ECO:0000255" key="3"/>
<evidence type="ECO:0000255" key="4">
    <source>
        <dbReference type="PROSITE-ProRule" id="PRU01080"/>
    </source>
</evidence>
<evidence type="ECO:0000255" key="5">
    <source>
        <dbReference type="PROSITE-ProRule" id="PRU01219"/>
    </source>
</evidence>
<evidence type="ECO:0000269" key="6">
    <source>
    </source>
</evidence>
<evidence type="ECO:0000305" key="7"/>
<dbReference type="EC" id="3.4.-.-" evidence="2"/>
<dbReference type="EC" id="3.4.22.45" evidence="2"/>
<dbReference type="EMBL" id="M38377">
    <property type="protein sequence ID" value="AAA47183.1"/>
    <property type="molecule type" value="Genomic_RNA"/>
</dbReference>
<dbReference type="SMR" id="P22601"/>
<dbReference type="GO" id="GO:0004197">
    <property type="term" value="F:cysteine-type endopeptidase activity"/>
    <property type="evidence" value="ECO:0007669"/>
    <property type="project" value="InterPro"/>
</dbReference>
<dbReference type="GO" id="GO:0008236">
    <property type="term" value="F:serine-type peptidase activity"/>
    <property type="evidence" value="ECO:0007669"/>
    <property type="project" value="UniProtKB-KW"/>
</dbReference>
<dbReference type="GO" id="GO:0006508">
    <property type="term" value="P:proteolysis"/>
    <property type="evidence" value="ECO:0007669"/>
    <property type="project" value="UniProtKB-KW"/>
</dbReference>
<dbReference type="GO" id="GO:0052170">
    <property type="term" value="P:symbiont-mediated suppression of host innate immune response"/>
    <property type="evidence" value="ECO:0007669"/>
    <property type="project" value="UniProtKB-KW"/>
</dbReference>
<dbReference type="Gene3D" id="3.90.70.150">
    <property type="entry name" value="Helper component proteinase"/>
    <property type="match status" value="1"/>
</dbReference>
<dbReference type="InterPro" id="IPR001456">
    <property type="entry name" value="HC-pro"/>
</dbReference>
<dbReference type="InterPro" id="IPR031159">
    <property type="entry name" value="HC_PRO_CPD_dom"/>
</dbReference>
<dbReference type="InterPro" id="IPR042308">
    <property type="entry name" value="HC_PRO_CPD_sf"/>
</dbReference>
<dbReference type="InterPro" id="IPR002540">
    <property type="entry name" value="Pept_S30_P1_potyvir"/>
</dbReference>
<dbReference type="InterPro" id="IPR039560">
    <property type="entry name" value="Potyvirid-P3"/>
</dbReference>
<dbReference type="Pfam" id="PF00851">
    <property type="entry name" value="Peptidase_C6"/>
    <property type="match status" value="1"/>
</dbReference>
<dbReference type="Pfam" id="PF01577">
    <property type="entry name" value="Peptidase_S30"/>
    <property type="match status" value="1"/>
</dbReference>
<dbReference type="Pfam" id="PF13608">
    <property type="entry name" value="Potyvirid-P3"/>
    <property type="match status" value="1"/>
</dbReference>
<dbReference type="PROSITE" id="PS51744">
    <property type="entry name" value="HC_PRO_CPD"/>
    <property type="match status" value="1"/>
</dbReference>
<dbReference type="PROSITE" id="PS51871">
    <property type="entry name" value="PV_P1_PRO"/>
    <property type="match status" value="1"/>
</dbReference>
<organismHost>
    <name type="scientific">Capsicum</name>
    <name type="common">peppers</name>
    <dbReference type="NCBI Taxonomy" id="4071"/>
</organismHost>
<organismHost>
    <name type="scientific">Nicotiana</name>
    <dbReference type="NCBI Taxonomy" id="4085"/>
</organismHost>
<organismHost>
    <name type="scientific">Solanum lycopersicum</name>
    <name type="common">Tomato</name>
    <name type="synonym">Lycopersicon esculentum</name>
    <dbReference type="NCBI Taxonomy" id="4081"/>
</organismHost>
<organismHost>
    <name type="scientific">Solanum tuberosum</name>
    <name type="common">Potato</name>
    <dbReference type="NCBI Taxonomy" id="4113"/>
</organismHost>
<name>POLG_PVYC</name>
<accession>P22601</accession>
<keyword id="KW-0945">Host-virus interaction</keyword>
<keyword id="KW-0378">Hydrolase</keyword>
<keyword id="KW-1090">Inhibition of host innate immune response by virus</keyword>
<keyword id="KW-0645">Protease</keyword>
<keyword id="KW-0720">Serine protease</keyword>
<keyword id="KW-0941">Suppressor of RNA silencing</keyword>
<keyword id="KW-0788">Thiol protease</keyword>
<keyword id="KW-0899">Viral immunoevasion</keyword>
<feature type="chain" id="PRO_0000420018" description="Genome polyprotein">
    <location>
        <begin position="1"/>
        <end position="856"/>
    </location>
</feature>
<feature type="chain" id="PRO_0000040417" description="P1 proteinase" evidence="3">
    <location>
        <begin position="1"/>
        <end position="284"/>
    </location>
</feature>
<feature type="chain" id="PRO_0000040418" description="Helper component proteinase" evidence="3">
    <location>
        <begin position="285"/>
        <end position="740"/>
    </location>
</feature>
<feature type="chain" id="PRO_0000040419" description="Protein P3" evidence="1">
    <location>
        <begin position="741"/>
        <end position="856" status="greater than"/>
    </location>
</feature>
<feature type="domain" description="Peptidase S30" evidence="5">
    <location>
        <begin position="141"/>
        <end position="284"/>
    </location>
</feature>
<feature type="domain" description="Peptidase C6" evidence="4">
    <location>
        <begin position="618"/>
        <end position="740"/>
    </location>
</feature>
<feature type="short sequence motif" description="Involved in virions binding and aphid transmission" evidence="1">
    <location>
        <begin position="592"/>
        <end position="594"/>
    </location>
</feature>
<feature type="active site" description="For P1 proteinase activity" evidence="5">
    <location>
        <position position="192"/>
    </location>
</feature>
<feature type="active site" description="For P1 proteinase activity" evidence="5">
    <location>
        <position position="201"/>
    </location>
</feature>
<feature type="active site" description="For P1 proteinase activity" evidence="5">
    <location>
        <position position="235"/>
    </location>
</feature>
<feature type="active site" description="For helper component proteinase activity" evidence="4">
    <location>
        <position position="626"/>
    </location>
</feature>
<feature type="active site" description="For helper component proteinase activity" evidence="4">
    <location>
        <position position="699"/>
    </location>
</feature>
<feature type="site" description="Cleavage; by P1 proteinase" evidence="5">
    <location>
        <begin position="284"/>
        <end position="285"/>
    </location>
</feature>
<feature type="site" description="Cleavage; by autolysis" evidence="4">
    <location>
        <begin position="740"/>
        <end position="741"/>
    </location>
</feature>
<feature type="non-terminal residue">
    <location>
        <position position="856"/>
    </location>
</feature>